<protein>
    <recommendedName>
        <fullName>Cytochrome b</fullName>
    </recommendedName>
    <alternativeName>
        <fullName>Complex III subunit 3</fullName>
    </alternativeName>
    <alternativeName>
        <fullName>Complex III subunit III</fullName>
    </alternativeName>
    <alternativeName>
        <fullName>Cytochrome b-c1 complex subunit 3</fullName>
    </alternativeName>
    <alternativeName>
        <fullName>Ubiquinol-cytochrome-c reductase complex cytochrome b subunit</fullName>
    </alternativeName>
</protein>
<proteinExistence type="inferred from homology"/>
<dbReference type="EMBL" id="AF422918">
    <property type="protein sequence ID" value="AAN31456.1"/>
    <property type="molecule type" value="Genomic_DNA"/>
</dbReference>
<dbReference type="GO" id="GO:0005743">
    <property type="term" value="C:mitochondrial inner membrane"/>
    <property type="evidence" value="ECO:0007669"/>
    <property type="project" value="UniProtKB-SubCell"/>
</dbReference>
<dbReference type="GO" id="GO:0045275">
    <property type="term" value="C:respiratory chain complex III"/>
    <property type="evidence" value="ECO:0007669"/>
    <property type="project" value="InterPro"/>
</dbReference>
<dbReference type="GO" id="GO:0046872">
    <property type="term" value="F:metal ion binding"/>
    <property type="evidence" value="ECO:0007669"/>
    <property type="project" value="UniProtKB-KW"/>
</dbReference>
<dbReference type="GO" id="GO:0008121">
    <property type="term" value="F:ubiquinol-cytochrome-c reductase activity"/>
    <property type="evidence" value="ECO:0007669"/>
    <property type="project" value="InterPro"/>
</dbReference>
<dbReference type="GO" id="GO:0006122">
    <property type="term" value="P:mitochondrial electron transport, ubiquinol to cytochrome c"/>
    <property type="evidence" value="ECO:0007669"/>
    <property type="project" value="TreeGrafter"/>
</dbReference>
<dbReference type="CDD" id="cd00290">
    <property type="entry name" value="cytochrome_b_C"/>
    <property type="match status" value="1"/>
</dbReference>
<dbReference type="CDD" id="cd00284">
    <property type="entry name" value="Cytochrome_b_N"/>
    <property type="match status" value="1"/>
</dbReference>
<dbReference type="FunFam" id="1.20.810.10:FF:000002">
    <property type="entry name" value="Cytochrome b"/>
    <property type="match status" value="1"/>
</dbReference>
<dbReference type="Gene3D" id="1.20.810.10">
    <property type="entry name" value="Cytochrome Bc1 Complex, Chain C"/>
    <property type="match status" value="1"/>
</dbReference>
<dbReference type="InterPro" id="IPR005798">
    <property type="entry name" value="Cyt_b/b6_C"/>
</dbReference>
<dbReference type="InterPro" id="IPR036150">
    <property type="entry name" value="Cyt_b/b6_C_sf"/>
</dbReference>
<dbReference type="InterPro" id="IPR005797">
    <property type="entry name" value="Cyt_b/b6_N"/>
</dbReference>
<dbReference type="InterPro" id="IPR027387">
    <property type="entry name" value="Cytb/b6-like_sf"/>
</dbReference>
<dbReference type="InterPro" id="IPR030689">
    <property type="entry name" value="Cytochrome_b"/>
</dbReference>
<dbReference type="InterPro" id="IPR048260">
    <property type="entry name" value="Cytochrome_b_C_euk/bac"/>
</dbReference>
<dbReference type="InterPro" id="IPR048259">
    <property type="entry name" value="Cytochrome_b_N_euk/bac"/>
</dbReference>
<dbReference type="InterPro" id="IPR016174">
    <property type="entry name" value="Di-haem_cyt_TM"/>
</dbReference>
<dbReference type="PANTHER" id="PTHR19271">
    <property type="entry name" value="CYTOCHROME B"/>
    <property type="match status" value="1"/>
</dbReference>
<dbReference type="PANTHER" id="PTHR19271:SF16">
    <property type="entry name" value="CYTOCHROME B"/>
    <property type="match status" value="1"/>
</dbReference>
<dbReference type="Pfam" id="PF00032">
    <property type="entry name" value="Cytochrom_B_C"/>
    <property type="match status" value="1"/>
</dbReference>
<dbReference type="Pfam" id="PF00033">
    <property type="entry name" value="Cytochrome_B"/>
    <property type="match status" value="1"/>
</dbReference>
<dbReference type="PIRSF" id="PIRSF038885">
    <property type="entry name" value="COB"/>
    <property type="match status" value="1"/>
</dbReference>
<dbReference type="SUPFAM" id="SSF81648">
    <property type="entry name" value="a domain/subunit of cytochrome bc1 complex (Ubiquinol-cytochrome c reductase)"/>
    <property type="match status" value="1"/>
</dbReference>
<dbReference type="SUPFAM" id="SSF81342">
    <property type="entry name" value="Transmembrane di-heme cytochromes"/>
    <property type="match status" value="1"/>
</dbReference>
<dbReference type="PROSITE" id="PS51003">
    <property type="entry name" value="CYTB_CTER"/>
    <property type="match status" value="1"/>
</dbReference>
<dbReference type="PROSITE" id="PS51002">
    <property type="entry name" value="CYTB_NTER"/>
    <property type="match status" value="1"/>
</dbReference>
<reference key="1">
    <citation type="journal article" date="2002" name="Mol. Phylogenet. Evol.">
        <title>Evolution of South American spiny rats (Rodentia, Echimyidae): the star-phylogeny hypothesis revisited.</title>
        <authorList>
            <person name="Leite Y.L.R."/>
            <person name="Patton J.L."/>
        </authorList>
    </citation>
    <scope>NUCLEOTIDE SEQUENCE [GENOMIC DNA]</scope>
</reference>
<evidence type="ECO:0000250" key="1"/>
<evidence type="ECO:0000250" key="2">
    <source>
        <dbReference type="UniProtKB" id="P00157"/>
    </source>
</evidence>
<evidence type="ECO:0000255" key="3">
    <source>
        <dbReference type="PROSITE-ProRule" id="PRU00967"/>
    </source>
</evidence>
<evidence type="ECO:0000255" key="4">
    <source>
        <dbReference type="PROSITE-ProRule" id="PRU00968"/>
    </source>
</evidence>
<geneLocation type="mitochondrion"/>
<name>CYB_CLYLA</name>
<feature type="chain" id="PRO_0000255010" description="Cytochrome b">
    <location>
        <begin position="1"/>
        <end position="379"/>
    </location>
</feature>
<feature type="transmembrane region" description="Helical" evidence="2">
    <location>
        <begin position="33"/>
        <end position="53"/>
    </location>
</feature>
<feature type="transmembrane region" description="Helical" evidence="2">
    <location>
        <begin position="77"/>
        <end position="98"/>
    </location>
</feature>
<feature type="transmembrane region" description="Helical" evidence="2">
    <location>
        <begin position="113"/>
        <end position="133"/>
    </location>
</feature>
<feature type="transmembrane region" description="Helical" evidence="2">
    <location>
        <begin position="178"/>
        <end position="198"/>
    </location>
</feature>
<feature type="transmembrane region" description="Helical" evidence="2">
    <location>
        <begin position="226"/>
        <end position="246"/>
    </location>
</feature>
<feature type="transmembrane region" description="Helical" evidence="2">
    <location>
        <begin position="288"/>
        <end position="308"/>
    </location>
</feature>
<feature type="transmembrane region" description="Helical" evidence="2">
    <location>
        <begin position="320"/>
        <end position="340"/>
    </location>
</feature>
<feature type="transmembrane region" description="Helical" evidence="2">
    <location>
        <begin position="347"/>
        <end position="367"/>
    </location>
</feature>
<feature type="binding site" description="axial binding residue" evidence="2">
    <location>
        <position position="83"/>
    </location>
    <ligand>
        <name>heme b</name>
        <dbReference type="ChEBI" id="CHEBI:60344"/>
        <label>b562</label>
    </ligand>
    <ligandPart>
        <name>Fe</name>
        <dbReference type="ChEBI" id="CHEBI:18248"/>
    </ligandPart>
</feature>
<feature type="binding site" description="axial binding residue" evidence="2">
    <location>
        <position position="97"/>
    </location>
    <ligand>
        <name>heme b</name>
        <dbReference type="ChEBI" id="CHEBI:60344"/>
        <label>b566</label>
    </ligand>
    <ligandPart>
        <name>Fe</name>
        <dbReference type="ChEBI" id="CHEBI:18248"/>
    </ligandPart>
</feature>
<feature type="binding site" description="axial binding residue" evidence="2">
    <location>
        <position position="182"/>
    </location>
    <ligand>
        <name>heme b</name>
        <dbReference type="ChEBI" id="CHEBI:60344"/>
        <label>b562</label>
    </ligand>
    <ligandPart>
        <name>Fe</name>
        <dbReference type="ChEBI" id="CHEBI:18248"/>
    </ligandPart>
</feature>
<feature type="binding site" description="axial binding residue" evidence="2">
    <location>
        <position position="196"/>
    </location>
    <ligand>
        <name>heme b</name>
        <dbReference type="ChEBI" id="CHEBI:60344"/>
        <label>b566</label>
    </ligand>
    <ligandPart>
        <name>Fe</name>
        <dbReference type="ChEBI" id="CHEBI:18248"/>
    </ligandPart>
</feature>
<feature type="binding site" evidence="2">
    <location>
        <position position="201"/>
    </location>
    <ligand>
        <name>a ubiquinone</name>
        <dbReference type="ChEBI" id="CHEBI:16389"/>
    </ligand>
</feature>
<keyword id="KW-0249">Electron transport</keyword>
<keyword id="KW-0349">Heme</keyword>
<keyword id="KW-0408">Iron</keyword>
<keyword id="KW-0472">Membrane</keyword>
<keyword id="KW-0479">Metal-binding</keyword>
<keyword id="KW-0496">Mitochondrion</keyword>
<keyword id="KW-0999">Mitochondrion inner membrane</keyword>
<keyword id="KW-0679">Respiratory chain</keyword>
<keyword id="KW-0812">Transmembrane</keyword>
<keyword id="KW-1133">Transmembrane helix</keyword>
<keyword id="KW-0813">Transport</keyword>
<keyword id="KW-0830">Ubiquinone</keyword>
<sequence>MTNLRKTHPLIKIXNHSFIDLPXPSFISTXXNFGSLLGVCLVLQIITGLFLAMHYTADTTTAFSSVTHICRDVNYGWLIRYAHANGASMFFIFLYFHIGRGLYYGSYTFMETWNIGVILLFTVMATAFMGYVLPWGQMSFWGATVITNLLSAIPYIGPTLVEWIWGGFSVDKATLTRFFAFHFILPFIITAMVMIHLLFLHESGSNNPSGLNSDSDKIPFHPYYTIKDILGLLLMSLTLLMLILFSPDLLGDPDNYSPANPLNTPPHIKPEWYFLFAYAILRSIPNKLGGVLTLVLSILILMMFPVLHTAKQRSMTFRPMSQCLLWILVANLIILTWIGGQPVEYPFITIGQLASISYFCIILILMPITSLMENHLLKW</sequence>
<comment type="function">
    <text evidence="2">Component of the ubiquinol-cytochrome c reductase complex (complex III or cytochrome b-c1 complex) that is part of the mitochondrial respiratory chain. The b-c1 complex mediates electron transfer from ubiquinol to cytochrome c. Contributes to the generation of a proton gradient across the mitochondrial membrane that is then used for ATP synthesis.</text>
</comment>
<comment type="cofactor">
    <cofactor evidence="2">
        <name>heme b</name>
        <dbReference type="ChEBI" id="CHEBI:60344"/>
    </cofactor>
    <text evidence="2">Binds 2 heme b groups non-covalently.</text>
</comment>
<comment type="subunit">
    <text evidence="2">The cytochrome bc1 complex contains 11 subunits: 3 respiratory subunits (MT-CYB, CYC1 and UQCRFS1), 2 core proteins (UQCRC1 and UQCRC2) and 6 low-molecular weight proteins (UQCRH/QCR6, UQCRB/QCR7, UQCRQ/QCR8, UQCR10/QCR9, UQCR11/QCR10 and a cleavage product of UQCRFS1). This cytochrome bc1 complex then forms a dimer.</text>
</comment>
<comment type="subcellular location">
    <subcellularLocation>
        <location evidence="2">Mitochondrion inner membrane</location>
        <topology evidence="2">Multi-pass membrane protein</topology>
    </subcellularLocation>
</comment>
<comment type="miscellaneous">
    <text evidence="1">Heme 1 (or BL or b562) is low-potential and absorbs at about 562 nm, and heme 2 (or BH or b566) is high-potential and absorbs at about 566 nm.</text>
</comment>
<comment type="similarity">
    <text evidence="3 4">Belongs to the cytochrome b family.</text>
</comment>
<comment type="caution">
    <text evidence="2">The full-length protein contains only eight transmembrane helices, not nine as predicted by bioinformatics tools.</text>
</comment>
<accession>Q8HD57</accession>
<organism>
    <name type="scientific">Clyomys laticeps</name>
    <name type="common">Broad-headed spiny rat</name>
    <dbReference type="NCBI Taxonomy" id="176498"/>
    <lineage>
        <taxon>Eukaryota</taxon>
        <taxon>Metazoa</taxon>
        <taxon>Chordata</taxon>
        <taxon>Craniata</taxon>
        <taxon>Vertebrata</taxon>
        <taxon>Euteleostomi</taxon>
        <taxon>Mammalia</taxon>
        <taxon>Eutheria</taxon>
        <taxon>Euarchontoglires</taxon>
        <taxon>Glires</taxon>
        <taxon>Rodentia</taxon>
        <taxon>Hystricomorpha</taxon>
        <taxon>Echimyidae</taxon>
        <taxon>Clyomys</taxon>
    </lineage>
</organism>
<gene>
    <name type="primary">MT-CYB</name>
    <name type="synonym">COB</name>
    <name type="synonym">CYTB</name>
    <name type="synonym">MTCYB</name>
</gene>